<keyword id="KW-0150">Chloroplast</keyword>
<keyword id="KW-0472">Membrane</keyword>
<keyword id="KW-0934">Plastid</keyword>
<keyword id="KW-0793">Thylakoid</keyword>
<keyword id="KW-0812">Transmembrane</keyword>
<keyword id="KW-1133">Transmembrane helix</keyword>
<comment type="function">
    <text evidence="1">May play a role in photosystem I and II biogenesis.</text>
</comment>
<comment type="subcellular location">
    <subcellularLocation>
        <location evidence="1">Plastid</location>
        <location evidence="1">Chloroplast thylakoid membrane</location>
        <topology evidence="1">Single-pass membrane protein</topology>
    </subcellularLocation>
</comment>
<comment type="similarity">
    <text evidence="1">Belongs to the PsbN family.</text>
</comment>
<comment type="caution">
    <text evidence="1">Originally thought to be a component of PSII; based on experiments in Synechocystis, N.tabacum and barley, and its absence from PSII in T.elongatus and T.vulcanus, this is probably not true.</text>
</comment>
<accession>Q67HV0</accession>
<organism>
    <name type="scientific">Asparagus officinalis</name>
    <name type="common">Garden asparagus</name>
    <dbReference type="NCBI Taxonomy" id="4686"/>
    <lineage>
        <taxon>Eukaryota</taxon>
        <taxon>Viridiplantae</taxon>
        <taxon>Streptophyta</taxon>
        <taxon>Embryophyta</taxon>
        <taxon>Tracheophyta</taxon>
        <taxon>Spermatophyta</taxon>
        <taxon>Magnoliopsida</taxon>
        <taxon>Liliopsida</taxon>
        <taxon>Asparagales</taxon>
        <taxon>Asparagaceae</taxon>
        <taxon>Asparagoideae</taxon>
        <taxon>Asparagus</taxon>
    </lineage>
</organism>
<reference key="1">
    <citation type="submission" date="2002-09" db="EMBL/GenBank/DDBJ databases">
        <title>Phylogenetic relationships among the major lineages of Asparagales based on a large chloroplast data set.</title>
        <authorList>
            <person name="McPherson M.A."/>
            <person name="Rai H.S."/>
            <person name="Wong W.A."/>
            <person name="Graham S.W."/>
        </authorList>
    </citation>
    <scope>NUCLEOTIDE SEQUENCE [GENOMIC DNA]</scope>
</reference>
<evidence type="ECO:0000255" key="1">
    <source>
        <dbReference type="HAMAP-Rule" id="MF_00293"/>
    </source>
</evidence>
<dbReference type="EMBL" id="AY147538">
    <property type="protein sequence ID" value="AAN32252.1"/>
    <property type="molecule type" value="Genomic_DNA"/>
</dbReference>
<dbReference type="RefSeq" id="YP_009370049.1">
    <property type="nucleotide sequence ID" value="NC_034777.1"/>
</dbReference>
<dbReference type="SMR" id="Q67HV0"/>
<dbReference type="GeneID" id="33018206"/>
<dbReference type="GO" id="GO:0009535">
    <property type="term" value="C:chloroplast thylakoid membrane"/>
    <property type="evidence" value="ECO:0007669"/>
    <property type="project" value="UniProtKB-SubCell"/>
</dbReference>
<dbReference type="GO" id="GO:0015979">
    <property type="term" value="P:photosynthesis"/>
    <property type="evidence" value="ECO:0007669"/>
    <property type="project" value="InterPro"/>
</dbReference>
<dbReference type="HAMAP" id="MF_00293">
    <property type="entry name" value="PSII_PsbN"/>
    <property type="match status" value="1"/>
</dbReference>
<dbReference type="InterPro" id="IPR003398">
    <property type="entry name" value="PSII_PsbN"/>
</dbReference>
<dbReference type="PANTHER" id="PTHR35326">
    <property type="entry name" value="PROTEIN PSBN"/>
    <property type="match status" value="1"/>
</dbReference>
<dbReference type="PANTHER" id="PTHR35326:SF3">
    <property type="entry name" value="PROTEIN PSBN"/>
    <property type="match status" value="1"/>
</dbReference>
<dbReference type="Pfam" id="PF02468">
    <property type="entry name" value="PsbN"/>
    <property type="match status" value="1"/>
</dbReference>
<sequence length="43" mass="4722">METATLVAIFISGLLVSFTGYALYTAFGQPSQQLRDPFEEHGD</sequence>
<gene>
    <name evidence="1" type="primary">psbN</name>
</gene>
<proteinExistence type="inferred from homology"/>
<protein>
    <recommendedName>
        <fullName evidence="1">Protein PsbN</fullName>
    </recommendedName>
</protein>
<feature type="chain" id="PRO_0000207869" description="Protein PsbN">
    <location>
        <begin position="1"/>
        <end position="43"/>
    </location>
</feature>
<feature type="transmembrane region" description="Helical" evidence="1">
    <location>
        <begin position="7"/>
        <end position="27"/>
    </location>
</feature>
<name>PSBN_ASPOF</name>
<geneLocation type="chloroplast"/>